<feature type="chain" id="PRO_0000147097" description="Multiphosphoryl transfer protein 1">
    <location>
        <begin position="1"/>
        <end position="831"/>
    </location>
</feature>
<feature type="domain" description="HPr" evidence="5">
    <location>
        <begin position="1"/>
        <end position="90"/>
    </location>
</feature>
<feature type="domain" description="PTS EIIA type-2" evidence="4">
    <location>
        <begin position="685"/>
        <end position="828"/>
    </location>
</feature>
<feature type="region of interest" description="PTS EI" evidence="8">
    <location>
        <begin position="119"/>
        <end position="650"/>
    </location>
</feature>
<feature type="active site" description="Pros-phosphohistidine intermediate; for HPr activity" evidence="5">
    <location>
        <position position="15"/>
    </location>
</feature>
<feature type="active site" description="Tele-phosphohistidine intermediate; for PTS EI activity" evidence="1 4">
    <location>
        <position position="298"/>
    </location>
</feature>
<feature type="active site" description="Proton donor; for EI activity" evidence="1">
    <location>
        <position position="611"/>
    </location>
</feature>
<feature type="active site" description="Tele-phosphohistidine intermediate; for PTS EIIA activity" evidence="4">
    <location>
        <position position="747"/>
    </location>
</feature>
<feature type="binding site" evidence="3">
    <location>
        <position position="405"/>
    </location>
    <ligand>
        <name>phosphoenolpyruvate</name>
        <dbReference type="ChEBI" id="CHEBI:58702"/>
    </ligand>
</feature>
<feature type="binding site" evidence="1">
    <location>
        <position position="441"/>
    </location>
    <ligand>
        <name>phosphoenolpyruvate</name>
        <dbReference type="ChEBI" id="CHEBI:58702"/>
    </ligand>
</feature>
<feature type="binding site" evidence="1">
    <location>
        <position position="540"/>
    </location>
    <ligand>
        <name>Mg(2+)</name>
        <dbReference type="ChEBI" id="CHEBI:18420"/>
    </ligand>
</feature>
<feature type="binding site" evidence="1">
    <location>
        <begin position="563"/>
        <end position="564"/>
    </location>
    <ligand>
        <name>phosphoenolpyruvate</name>
        <dbReference type="ChEBI" id="CHEBI:58702"/>
    </ligand>
</feature>
<feature type="binding site" evidence="1">
    <location>
        <position position="564"/>
    </location>
    <ligand>
        <name>Mg(2+)</name>
        <dbReference type="ChEBI" id="CHEBI:18420"/>
    </ligand>
</feature>
<feature type="binding site" evidence="3">
    <location>
        <position position="574"/>
    </location>
    <ligand>
        <name>phosphoenolpyruvate</name>
        <dbReference type="ChEBI" id="CHEBI:58702"/>
    </ligand>
</feature>
<feature type="modified residue" description="Phosphohistidine; by EI" evidence="7">
    <location>
        <position position="15"/>
    </location>
</feature>
<feature type="modified residue" description="Phosphohistidine; by autocatalysis" evidence="7">
    <location>
        <position position="298"/>
    </location>
</feature>
<feature type="modified residue" description="Phosphohistidine; by HPr" evidence="7">
    <location>
        <position position="747"/>
    </location>
</feature>
<accession>P77439</accession>
<comment type="function">
    <text evidence="8">Multifunctional protein that includes general (non sugar-specific) and sugar-specific components of the phosphoenolpyruvate-dependent sugar phosphotransferase system (sugar PTS). This major carbohydrate active transport system catalyzes the phosphorylation of incoming sugar substrates concomitantly with their translocation across the cell membrane. The enzyme II FryABC PTS system is involved in fructose transport.</text>
</comment>
<comment type="catalytic activity">
    <reaction evidence="1">
        <text>L-histidyl-[protein] + phosphoenolpyruvate = N(pros)-phospho-L-histidyl-[protein] + pyruvate</text>
        <dbReference type="Rhea" id="RHEA:23880"/>
        <dbReference type="Rhea" id="RHEA-COMP:9745"/>
        <dbReference type="Rhea" id="RHEA-COMP:9746"/>
        <dbReference type="ChEBI" id="CHEBI:15361"/>
        <dbReference type="ChEBI" id="CHEBI:29979"/>
        <dbReference type="ChEBI" id="CHEBI:58702"/>
        <dbReference type="ChEBI" id="CHEBI:64837"/>
        <dbReference type="EC" id="2.7.3.9"/>
    </reaction>
</comment>
<comment type="catalytic activity">
    <reaction evidence="2">
        <text>D-fructose(out) + N(pros)-phospho-L-histidyl-[protein] = D-fructose 1-phosphate(in) + L-histidyl-[protein]</text>
        <dbReference type="Rhea" id="RHEA:49252"/>
        <dbReference type="Rhea" id="RHEA-COMP:9745"/>
        <dbReference type="Rhea" id="RHEA-COMP:9746"/>
        <dbReference type="ChEBI" id="CHEBI:29979"/>
        <dbReference type="ChEBI" id="CHEBI:37721"/>
        <dbReference type="ChEBI" id="CHEBI:58674"/>
        <dbReference type="ChEBI" id="CHEBI:64837"/>
        <dbReference type="EC" id="2.7.1.202"/>
    </reaction>
</comment>
<comment type="cofactor">
    <cofactor evidence="1">
        <name>Mg(2+)</name>
        <dbReference type="ChEBI" id="CHEBI:18420"/>
    </cofactor>
</comment>
<comment type="interaction">
    <interactant intactId="EBI-545399">
        <id>P77439</id>
    </interactant>
    <interactant intactId="EBI-542683">
        <id>P0AFG8</id>
        <label>aceE</label>
    </interactant>
    <organismsDiffer>false</organismsDiffer>
    <experiments>2</experiments>
</comment>
<comment type="subcellular location">
    <subcellularLocation>
        <location evidence="7">Cytoplasm</location>
    </subcellularLocation>
</comment>
<comment type="domain">
    <text evidence="4">The PTS EIIA type-2 domain is phosphorylated by phospho-HPr on a histidyl residue. Then, it transfers the phosphoryl group to the PTS EIIB type-2 domain.</text>
</comment>
<comment type="domain">
    <text evidence="7">In contrast to classical PTS systems, the fructose-like PTS has no requirement for HPr and Enzyme I; FryA combines a IIA domain with an Enzyme I and a HPr domains.</text>
</comment>
<comment type="similarity">
    <text evidence="7">Belongs to the PEP-utilizing enzyme family.</text>
</comment>
<keyword id="KW-0963">Cytoplasm</keyword>
<keyword id="KW-0418">Kinase</keyword>
<keyword id="KW-0460">Magnesium</keyword>
<keyword id="KW-0479">Metal-binding</keyword>
<keyword id="KW-0597">Phosphoprotein</keyword>
<keyword id="KW-0598">Phosphotransferase system</keyword>
<keyword id="KW-1185">Reference proteome</keyword>
<keyword id="KW-0762">Sugar transport</keyword>
<keyword id="KW-0808">Transferase</keyword>
<keyword id="KW-0813">Transport</keyword>
<reference key="1">
    <citation type="journal article" date="1997" name="DNA Res.">
        <title>Construction of a contiguous 874-kb sequence of the Escherichia coli-K12 genome corresponding to 50.0-68.8 min on the linkage map and analysis of its sequence features.</title>
        <authorList>
            <person name="Yamamoto Y."/>
            <person name="Aiba H."/>
            <person name="Baba T."/>
            <person name="Hayashi K."/>
            <person name="Inada T."/>
            <person name="Isono K."/>
            <person name="Itoh T."/>
            <person name="Kimura S."/>
            <person name="Kitagawa M."/>
            <person name="Makino K."/>
            <person name="Miki T."/>
            <person name="Mitsuhashi N."/>
            <person name="Mizobuchi K."/>
            <person name="Mori H."/>
            <person name="Nakade S."/>
            <person name="Nakamura Y."/>
            <person name="Nashimoto H."/>
            <person name="Oshima T."/>
            <person name="Oyama S."/>
            <person name="Saito N."/>
            <person name="Sampei G."/>
            <person name="Satoh Y."/>
            <person name="Sivasundaram S."/>
            <person name="Tagami H."/>
            <person name="Takahashi H."/>
            <person name="Takeda J."/>
            <person name="Takemoto K."/>
            <person name="Uehara K."/>
            <person name="Wada C."/>
            <person name="Yamagata S."/>
            <person name="Horiuchi T."/>
        </authorList>
    </citation>
    <scope>NUCLEOTIDE SEQUENCE [LARGE SCALE GENOMIC DNA]</scope>
    <source>
        <strain>K12 / W3110 / ATCC 27325 / DSM 5911</strain>
    </source>
</reference>
<reference key="2">
    <citation type="journal article" date="1997" name="Science">
        <title>The complete genome sequence of Escherichia coli K-12.</title>
        <authorList>
            <person name="Blattner F.R."/>
            <person name="Plunkett G. III"/>
            <person name="Bloch C.A."/>
            <person name="Perna N.T."/>
            <person name="Burland V."/>
            <person name="Riley M."/>
            <person name="Collado-Vides J."/>
            <person name="Glasner J.D."/>
            <person name="Rode C.K."/>
            <person name="Mayhew G.F."/>
            <person name="Gregor J."/>
            <person name="Davis N.W."/>
            <person name="Kirkpatrick H.A."/>
            <person name="Goeden M.A."/>
            <person name="Rose D.J."/>
            <person name="Mau B."/>
            <person name="Shao Y."/>
        </authorList>
    </citation>
    <scope>NUCLEOTIDE SEQUENCE [LARGE SCALE GENOMIC DNA]</scope>
    <source>
        <strain>K12 / MG1655 / ATCC 47076</strain>
    </source>
</reference>
<reference key="3">
    <citation type="journal article" date="2006" name="Mol. Syst. Biol.">
        <title>Highly accurate genome sequences of Escherichia coli K-12 strains MG1655 and W3110.</title>
        <authorList>
            <person name="Hayashi K."/>
            <person name="Morooka N."/>
            <person name="Yamamoto Y."/>
            <person name="Fujita K."/>
            <person name="Isono K."/>
            <person name="Choi S."/>
            <person name="Ohtsubo E."/>
            <person name="Baba T."/>
            <person name="Wanner B.L."/>
            <person name="Mori H."/>
            <person name="Horiuchi T."/>
        </authorList>
    </citation>
    <scope>NUCLEOTIDE SEQUENCE [LARGE SCALE GENOMIC DNA]</scope>
    <source>
        <strain>K12 / W3110 / ATCC 27325 / DSM 5911</strain>
    </source>
</reference>
<reference key="4">
    <citation type="journal article" date="2001" name="J. Mol. Microbiol. Biotechnol.">
        <title>The complete phosphotransferase system in Escherichia coli.</title>
        <authorList>
            <person name="Tchieu J.H."/>
            <person name="Norris V."/>
            <person name="Edwards J.S."/>
            <person name="Saier M.H. Jr."/>
        </authorList>
    </citation>
    <scope>FUNCTION</scope>
    <scope>DISCUSSION OF SEQUENCE</scope>
</reference>
<dbReference type="EC" id="2.7.3.9" evidence="1"/>
<dbReference type="EC" id="2.7.1.202" evidence="2"/>
<dbReference type="EMBL" id="U00096">
    <property type="protein sequence ID" value="AAC75442.1"/>
    <property type="molecule type" value="Genomic_DNA"/>
</dbReference>
<dbReference type="EMBL" id="AP009048">
    <property type="protein sequence ID" value="BAA16253.1"/>
    <property type="molecule type" value="Genomic_DNA"/>
</dbReference>
<dbReference type="PIR" id="D65012">
    <property type="entry name" value="D65012"/>
</dbReference>
<dbReference type="RefSeq" id="NP_416884.1">
    <property type="nucleotide sequence ID" value="NC_000913.3"/>
</dbReference>
<dbReference type="SMR" id="P77439"/>
<dbReference type="BioGRID" id="4261077">
    <property type="interactions" value="13"/>
</dbReference>
<dbReference type="DIP" id="DIP-12817N"/>
<dbReference type="FunCoup" id="P77439">
    <property type="interactions" value="215"/>
</dbReference>
<dbReference type="IntAct" id="P77439">
    <property type="interactions" value="1"/>
</dbReference>
<dbReference type="STRING" id="511145.b2383"/>
<dbReference type="TCDB" id="4.A.2.1.11">
    <property type="family name" value="the pts fructose-mannitol (fru) family"/>
</dbReference>
<dbReference type="jPOST" id="P77439"/>
<dbReference type="PaxDb" id="511145-b2383"/>
<dbReference type="EnsemblBacteria" id="AAC75442">
    <property type="protein sequence ID" value="AAC75442"/>
    <property type="gene ID" value="b2383"/>
</dbReference>
<dbReference type="GeneID" id="946852"/>
<dbReference type="KEGG" id="ecj:JW2380"/>
<dbReference type="KEGG" id="eco:b2383"/>
<dbReference type="KEGG" id="ecoc:C3026_13250"/>
<dbReference type="PATRIC" id="fig|1411691.4.peg.4345"/>
<dbReference type="EchoBASE" id="EB3903"/>
<dbReference type="eggNOG" id="COG1080">
    <property type="taxonomic scope" value="Bacteria"/>
</dbReference>
<dbReference type="eggNOG" id="COG1762">
    <property type="taxonomic scope" value="Bacteria"/>
</dbReference>
<dbReference type="eggNOG" id="COG1925">
    <property type="taxonomic scope" value="Bacteria"/>
</dbReference>
<dbReference type="HOGENOM" id="CLU_007308_5_1_6"/>
<dbReference type="InParanoid" id="P77439"/>
<dbReference type="OMA" id="EMLFMDR"/>
<dbReference type="OrthoDB" id="9765468at2"/>
<dbReference type="PhylomeDB" id="P77439"/>
<dbReference type="BioCyc" id="EcoCyc:G7246-MONOMER"/>
<dbReference type="PRO" id="PR:P77439"/>
<dbReference type="Proteomes" id="UP000000625">
    <property type="component" value="Chromosome"/>
</dbReference>
<dbReference type="GO" id="GO:0005737">
    <property type="term" value="C:cytoplasm"/>
    <property type="evidence" value="ECO:0007669"/>
    <property type="project" value="UniProtKB-SubCell"/>
</dbReference>
<dbReference type="GO" id="GO:0016020">
    <property type="term" value="C:membrane"/>
    <property type="evidence" value="ECO:0007669"/>
    <property type="project" value="InterPro"/>
</dbReference>
<dbReference type="GO" id="GO:0016301">
    <property type="term" value="F:kinase activity"/>
    <property type="evidence" value="ECO:0007669"/>
    <property type="project" value="UniProtKB-KW"/>
</dbReference>
<dbReference type="GO" id="GO:0046872">
    <property type="term" value="F:metal ion binding"/>
    <property type="evidence" value="ECO:0007669"/>
    <property type="project" value="UniProtKB-KW"/>
</dbReference>
<dbReference type="GO" id="GO:0008965">
    <property type="term" value="F:phosphoenolpyruvate-protein phosphotransferase activity"/>
    <property type="evidence" value="ECO:0000318"/>
    <property type="project" value="GO_Central"/>
</dbReference>
<dbReference type="GO" id="GO:0008982">
    <property type="term" value="F:protein-N(PI)-phosphohistidine-sugar phosphotransferase activity"/>
    <property type="evidence" value="ECO:0007669"/>
    <property type="project" value="InterPro"/>
</dbReference>
<dbReference type="GO" id="GO:0015764">
    <property type="term" value="P:N-acetylglucosamine transport"/>
    <property type="evidence" value="ECO:0000318"/>
    <property type="project" value="GO_Central"/>
</dbReference>
<dbReference type="GO" id="GO:0009401">
    <property type="term" value="P:phosphoenolpyruvate-dependent sugar phosphotransferase system"/>
    <property type="evidence" value="ECO:0007669"/>
    <property type="project" value="UniProtKB-KW"/>
</dbReference>
<dbReference type="CDD" id="cd00367">
    <property type="entry name" value="PTS-HPr_like"/>
    <property type="match status" value="1"/>
</dbReference>
<dbReference type="CDD" id="cd00211">
    <property type="entry name" value="PTS_IIA_fru"/>
    <property type="match status" value="1"/>
</dbReference>
<dbReference type="Gene3D" id="3.30.1340.10">
    <property type="entry name" value="HPr-like"/>
    <property type="match status" value="1"/>
</dbReference>
<dbReference type="Gene3D" id="3.40.930.10">
    <property type="entry name" value="Mannitol-specific EII, Chain A"/>
    <property type="match status" value="1"/>
</dbReference>
<dbReference type="Gene3D" id="3.20.20.60">
    <property type="entry name" value="Phosphoenolpyruvate-binding domains"/>
    <property type="match status" value="1"/>
</dbReference>
<dbReference type="Gene3D" id="3.50.30.10">
    <property type="entry name" value="Phosphohistidine domain"/>
    <property type="match status" value="1"/>
</dbReference>
<dbReference type="Gene3D" id="1.10.274.10">
    <property type="entry name" value="PtsI, HPr-binding domain"/>
    <property type="match status" value="1"/>
</dbReference>
<dbReference type="InterPro" id="IPR000032">
    <property type="entry name" value="HPr-like"/>
</dbReference>
<dbReference type="InterPro" id="IPR035895">
    <property type="entry name" value="HPr-like_sf"/>
</dbReference>
<dbReference type="InterPro" id="IPR008279">
    <property type="entry name" value="PEP-util_enz_mobile_dom"/>
</dbReference>
<dbReference type="InterPro" id="IPR050499">
    <property type="entry name" value="PEP-utilizing_PTS_enzyme"/>
</dbReference>
<dbReference type="InterPro" id="IPR000121">
    <property type="entry name" value="PEP_util_C"/>
</dbReference>
<dbReference type="InterPro" id="IPR023151">
    <property type="entry name" value="PEP_util_CS"/>
</dbReference>
<dbReference type="InterPro" id="IPR036637">
    <property type="entry name" value="Phosphohistidine_dom_sf"/>
</dbReference>
<dbReference type="InterPro" id="IPR016152">
    <property type="entry name" value="PTrfase/Anion_transptr"/>
</dbReference>
<dbReference type="InterPro" id="IPR006318">
    <property type="entry name" value="PTS_EI-like"/>
</dbReference>
<dbReference type="InterPro" id="IPR002178">
    <property type="entry name" value="PTS_EIIA_type-2_dom"/>
</dbReference>
<dbReference type="InterPro" id="IPR008731">
    <property type="entry name" value="PTS_EIN"/>
</dbReference>
<dbReference type="InterPro" id="IPR004715">
    <property type="entry name" value="PTS_IIA_fruc"/>
</dbReference>
<dbReference type="InterPro" id="IPR036618">
    <property type="entry name" value="PtsI_HPr-bd_sf"/>
</dbReference>
<dbReference type="InterPro" id="IPR015813">
    <property type="entry name" value="Pyrv/PenolPyrv_kinase-like_dom"/>
</dbReference>
<dbReference type="InterPro" id="IPR040442">
    <property type="entry name" value="Pyrv_kinase-like_dom_sf"/>
</dbReference>
<dbReference type="NCBIfam" id="TIGR00848">
    <property type="entry name" value="fruA"/>
    <property type="match status" value="1"/>
</dbReference>
<dbReference type="NCBIfam" id="TIGR01417">
    <property type="entry name" value="PTS_I_fam"/>
    <property type="match status" value="1"/>
</dbReference>
<dbReference type="PANTHER" id="PTHR46244:SF4">
    <property type="entry name" value="MULTIPHOSPHORYL TRANSFER PROTEIN 1-RELATED"/>
    <property type="match status" value="1"/>
</dbReference>
<dbReference type="PANTHER" id="PTHR46244">
    <property type="entry name" value="PHOSPHOENOLPYRUVATE-PROTEIN PHOSPHOTRANSFERASE"/>
    <property type="match status" value="1"/>
</dbReference>
<dbReference type="Pfam" id="PF05524">
    <property type="entry name" value="PEP-utilisers_N"/>
    <property type="match status" value="1"/>
</dbReference>
<dbReference type="Pfam" id="PF00391">
    <property type="entry name" value="PEP-utilizers"/>
    <property type="match status" value="1"/>
</dbReference>
<dbReference type="Pfam" id="PF02896">
    <property type="entry name" value="PEP-utilizers_C"/>
    <property type="match status" value="1"/>
</dbReference>
<dbReference type="Pfam" id="PF00381">
    <property type="entry name" value="PTS-HPr"/>
    <property type="match status" value="1"/>
</dbReference>
<dbReference type="Pfam" id="PF00359">
    <property type="entry name" value="PTS_EIIA_2"/>
    <property type="match status" value="1"/>
</dbReference>
<dbReference type="PRINTS" id="PR01736">
    <property type="entry name" value="PHPHTRNFRASE"/>
</dbReference>
<dbReference type="SUPFAM" id="SSF47831">
    <property type="entry name" value="Enzyme I of the PEP:sugar phosphotransferase system HPr-binding (sub)domain"/>
    <property type="match status" value="1"/>
</dbReference>
<dbReference type="SUPFAM" id="SSF55594">
    <property type="entry name" value="HPr-like"/>
    <property type="match status" value="1"/>
</dbReference>
<dbReference type="SUPFAM" id="SSF55804">
    <property type="entry name" value="Phoshotransferase/anion transport protein"/>
    <property type="match status" value="1"/>
</dbReference>
<dbReference type="SUPFAM" id="SSF51621">
    <property type="entry name" value="Phosphoenolpyruvate/pyruvate domain"/>
    <property type="match status" value="1"/>
</dbReference>
<dbReference type="SUPFAM" id="SSF52009">
    <property type="entry name" value="Phosphohistidine domain"/>
    <property type="match status" value="1"/>
</dbReference>
<dbReference type="PROSITE" id="PS00742">
    <property type="entry name" value="PEP_ENZYMES_2"/>
    <property type="match status" value="1"/>
</dbReference>
<dbReference type="PROSITE" id="PS51094">
    <property type="entry name" value="PTS_EIIA_TYPE_2"/>
    <property type="match status" value="1"/>
</dbReference>
<dbReference type="PROSITE" id="PS51350">
    <property type="entry name" value="PTS_HPR_DOM"/>
    <property type="match status" value="1"/>
</dbReference>
<name>PTFX1_ECOLI</name>
<proteinExistence type="evidence at protein level"/>
<sequence>MLTIQFLCPLPNGLHARPAWELKEQCSQWQSEITFINHRQNAKADAKSSLALIGTGTLFNDSCSLNISGSDEEQARRVLEEYIQVRFIDSDSVQPTQAELTAHPLPRSLSRLNPDLLYGNVLASGVGVGTLTLLQSDSLDSYRAIPASAQDSTRLEHSLATLAEQLNQQLRERDGESKTILSAHLSLIQDDEFAGNIRRLMTEQHQGLGAAIISNMEQVCAKLSASASDYLRERVSDIRDISEQLLHITWPELKPRNKLVLEKPTILVAEDLTPSQFLSLDLKNLAGMILEKTGRTSHTLILARASAIPVLSGLPLDAIARYAGQPAVLDAQCGVLAINPNDAVSGYYQVAQTLADKRQKQQAQAAAQLAYSRDNKRIDIAANIGTALEAPGAFANGAEGVGLFRTEMLYMDRDSAPDEQEQFEAYQQVLLAAGDKPIIFRTMDIGGDKSIPYLNIPQEENPFLGYRAVRIYPEFAGLFRTQLRAILRAASFGNAQLMIPMVHSLDQILWVKGEIQKAIVELKRDGLRHAETITLGIMVEVPSVCYIIDHFCDEVDFFSIGSNDMTQYLYAVDRNNPRVSPLYNPITPSFLRMLQQIVTTAHQRGKWVGICGELGGESRYLPLLLGLGLDELSMSSPRIPAVKSQLRQLDSEACRELARQACECRSAQEIEALLTAFTPEEDVRPLLALENIFVDQDFSNKEQAIQFLCGNLGVNGRTEHPFELEEDVWQREEIVTTGVGFGVAIPHTKSQWIRHSSISIARLAKPIGWQSEMGEVELVIMLTLGANEGMNHVKVFSQLARKLVNKNFRQSLFAAQDAQSILTLLETELTF</sequence>
<protein>
    <recommendedName>
        <fullName evidence="8">Multiphosphoryl transfer protein 1</fullName>
        <shortName evidence="8">MTP 1</shortName>
    </recommendedName>
    <alternativeName>
        <fullName evidence="8">Triphosphoryl transfer protein 1</fullName>
        <shortName evidence="8">TTP 1</shortName>
    </alternativeName>
    <domain>
        <recommendedName>
            <fullName evidence="6">Phosphoenolpyruvate-protein phosphotransferase</fullName>
            <ecNumber evidence="1">2.7.3.9</ecNumber>
        </recommendedName>
        <alternativeName>
            <fullName evidence="6">Phosphotransferase system enzyme I</fullName>
        </alternativeName>
    </domain>
    <domain>
        <recommendedName>
            <fullName evidence="6">Phosphocarrier protein HPr</fullName>
            <shortName evidence="6">Protein H</shortName>
        </recommendedName>
    </domain>
    <domain>
        <recommendedName>
            <fullName evidence="6">PTS system fructose-like EIIA component</fullName>
            <ecNumber evidence="2">2.7.1.202</ecNumber>
        </recommendedName>
        <alternativeName>
            <fullName evidence="6">Fructose-like phosphotransferase enzyme IIA component</fullName>
        </alternativeName>
    </domain>
</protein>
<organism>
    <name type="scientific">Escherichia coli (strain K12)</name>
    <dbReference type="NCBI Taxonomy" id="83333"/>
    <lineage>
        <taxon>Bacteria</taxon>
        <taxon>Pseudomonadati</taxon>
        <taxon>Pseudomonadota</taxon>
        <taxon>Gammaproteobacteria</taxon>
        <taxon>Enterobacterales</taxon>
        <taxon>Enterobacteriaceae</taxon>
        <taxon>Escherichia</taxon>
    </lineage>
</organism>
<evidence type="ECO:0000250" key="1">
    <source>
        <dbReference type="UniProtKB" id="P08839"/>
    </source>
</evidence>
<evidence type="ECO:0000250" key="2">
    <source>
        <dbReference type="UniProtKB" id="P20966"/>
    </source>
</evidence>
<evidence type="ECO:0000250" key="3">
    <source>
        <dbReference type="UniProtKB" id="P23533"/>
    </source>
</evidence>
<evidence type="ECO:0000255" key="4">
    <source>
        <dbReference type="PROSITE-ProRule" id="PRU00417"/>
    </source>
</evidence>
<evidence type="ECO:0000255" key="5">
    <source>
        <dbReference type="PROSITE-ProRule" id="PRU00681"/>
    </source>
</evidence>
<evidence type="ECO:0000303" key="6">
    <source>
    </source>
</evidence>
<evidence type="ECO:0000305" key="7"/>
<evidence type="ECO:0000305" key="8">
    <source>
    </source>
</evidence>
<gene>
    <name type="primary">fryA</name>
    <name type="synonym">ypdD</name>
    <name type="ordered locus">b2383</name>
    <name type="ordered locus">JW2380</name>
</gene>